<comment type="function">
    <text>Core component of nucleosome which plays a central role in DNA double strand break (DSB) repair. Nucleosomes wrap and compact DNA into chromatin, limiting DNA accessibility to the cellular machineries which require DNA as a template. Histones thereby play a central role in transcription regulation, DNA repair, DNA replication and chromosomal stability. DNA accessibility is regulated via a complex set of post-translational modifications of histones, also called histone code, and nucleosome remodeling.</text>
</comment>
<comment type="subunit">
    <text>The nucleosome is a histone octamer containing two molecules each of H2A, H2B, H3 and H4 assembled in one H3-H4 heterotetramer and two H2A-H2B heterodimers. The octamer wraps approximately 147 bp of DNA.</text>
</comment>
<comment type="subcellular location">
    <subcellularLocation>
        <location>Nucleus</location>
    </subcellularLocation>
    <subcellularLocation>
        <location>Chromosome</location>
    </subcellularLocation>
</comment>
<comment type="PTM">
    <text evidence="1">Acetylated by ESA1 to form H2AK4ac.</text>
</comment>
<comment type="miscellaneous">
    <text evidence="2">In contrast to vertebrates and insects, its C-terminus is not monoubiquitinated.</text>
</comment>
<comment type="similarity">
    <text evidence="2">Belongs to the histone H2A family.</text>
</comment>
<comment type="caution">
    <text evidence="2">To ensure consistency between histone entries, we follow the 'Brno' nomenclature for histone modifications, with positions referring to those used in the literature for the 'closest' model organism. Due to slight variations in histone sequences between organisms and to the presence of initiator methionine in UniProtKB/Swiss-Prot sequences, the actual positions of modified amino acids in the sequence generally differ. In this entry the following conventions are used: H2AK4ac = acetylated Lys-5.</text>
</comment>
<reference key="1">
    <citation type="journal article" date="2009" name="Nature">
        <title>Evolution of pathogenicity and sexual reproduction in eight Candida genomes.</title>
        <authorList>
            <person name="Butler G."/>
            <person name="Rasmussen M.D."/>
            <person name="Lin M.F."/>
            <person name="Santos M.A.S."/>
            <person name="Sakthikumar S."/>
            <person name="Munro C.A."/>
            <person name="Rheinbay E."/>
            <person name="Grabherr M."/>
            <person name="Forche A."/>
            <person name="Reedy J.L."/>
            <person name="Agrafioti I."/>
            <person name="Arnaud M.B."/>
            <person name="Bates S."/>
            <person name="Brown A.J.P."/>
            <person name="Brunke S."/>
            <person name="Costanzo M.C."/>
            <person name="Fitzpatrick D.A."/>
            <person name="de Groot P.W.J."/>
            <person name="Harris D."/>
            <person name="Hoyer L.L."/>
            <person name="Hube B."/>
            <person name="Klis F.M."/>
            <person name="Kodira C."/>
            <person name="Lennard N."/>
            <person name="Logue M.E."/>
            <person name="Martin R."/>
            <person name="Neiman A.M."/>
            <person name="Nikolaou E."/>
            <person name="Quail M.A."/>
            <person name="Quinn J."/>
            <person name="Santos M.C."/>
            <person name="Schmitzberger F.F."/>
            <person name="Sherlock G."/>
            <person name="Shah P."/>
            <person name="Silverstein K.A.T."/>
            <person name="Skrzypek M.S."/>
            <person name="Soll D."/>
            <person name="Staggs R."/>
            <person name="Stansfield I."/>
            <person name="Stumpf M.P.H."/>
            <person name="Sudbery P.E."/>
            <person name="Srikantha T."/>
            <person name="Zeng Q."/>
            <person name="Berman J."/>
            <person name="Berriman M."/>
            <person name="Heitman J."/>
            <person name="Gow N.A.R."/>
            <person name="Lorenz M.C."/>
            <person name="Birren B.W."/>
            <person name="Kellis M."/>
            <person name="Cuomo C.A."/>
        </authorList>
    </citation>
    <scope>NUCLEOTIDE SEQUENCE [LARGE SCALE GENOMIC DNA]</scope>
    <source>
        <strain>ATCC 11503 / BCRC 21390 / CBS 2605 / JCM 1781 / NBRC 1676 / NRRL YB-4239</strain>
    </source>
</reference>
<evidence type="ECO:0000250" key="1"/>
<evidence type="ECO:0000305" key="2"/>
<accession>A5DXS8</accession>
<dbReference type="EMBL" id="CH981525">
    <property type="protein sequence ID" value="EDK43986.1"/>
    <property type="molecule type" value="Genomic_DNA"/>
</dbReference>
<dbReference type="SMR" id="A5DXS8"/>
<dbReference type="STRING" id="379508.A5DXS8"/>
<dbReference type="GeneID" id="5234592"/>
<dbReference type="KEGG" id="lel:PVL30_002196"/>
<dbReference type="VEuPathDB" id="FungiDB:LELG_02165"/>
<dbReference type="eggNOG" id="KOG1756">
    <property type="taxonomic scope" value="Eukaryota"/>
</dbReference>
<dbReference type="HOGENOM" id="CLU_062828_3_1_1"/>
<dbReference type="InParanoid" id="A5DXS8"/>
<dbReference type="OMA" id="CALESQH"/>
<dbReference type="OrthoDB" id="9421954at2759"/>
<dbReference type="Proteomes" id="UP000001996">
    <property type="component" value="Unassembled WGS sequence"/>
</dbReference>
<dbReference type="GO" id="GO:0000786">
    <property type="term" value="C:nucleosome"/>
    <property type="evidence" value="ECO:0007669"/>
    <property type="project" value="UniProtKB-KW"/>
</dbReference>
<dbReference type="GO" id="GO:0005634">
    <property type="term" value="C:nucleus"/>
    <property type="evidence" value="ECO:0007669"/>
    <property type="project" value="UniProtKB-SubCell"/>
</dbReference>
<dbReference type="GO" id="GO:0003677">
    <property type="term" value="F:DNA binding"/>
    <property type="evidence" value="ECO:0007669"/>
    <property type="project" value="UniProtKB-KW"/>
</dbReference>
<dbReference type="GO" id="GO:0046982">
    <property type="term" value="F:protein heterodimerization activity"/>
    <property type="evidence" value="ECO:0007669"/>
    <property type="project" value="InterPro"/>
</dbReference>
<dbReference type="GO" id="GO:0030527">
    <property type="term" value="F:structural constituent of chromatin"/>
    <property type="evidence" value="ECO:0007669"/>
    <property type="project" value="InterPro"/>
</dbReference>
<dbReference type="GO" id="GO:0006281">
    <property type="term" value="P:DNA repair"/>
    <property type="evidence" value="ECO:0007669"/>
    <property type="project" value="UniProtKB-KW"/>
</dbReference>
<dbReference type="CDD" id="cd00074">
    <property type="entry name" value="HFD_H2A"/>
    <property type="match status" value="1"/>
</dbReference>
<dbReference type="FunFam" id="1.10.20.10:FF:000008">
    <property type="entry name" value="Histone H2A"/>
    <property type="match status" value="1"/>
</dbReference>
<dbReference type="Gene3D" id="1.10.20.10">
    <property type="entry name" value="Histone, subunit A"/>
    <property type="match status" value="1"/>
</dbReference>
<dbReference type="InterPro" id="IPR009072">
    <property type="entry name" value="Histone-fold"/>
</dbReference>
<dbReference type="InterPro" id="IPR002119">
    <property type="entry name" value="Histone_H2A"/>
</dbReference>
<dbReference type="InterPro" id="IPR007125">
    <property type="entry name" value="Histone_H2A/H2B/H3"/>
</dbReference>
<dbReference type="InterPro" id="IPR032454">
    <property type="entry name" value="Histone_H2A_C"/>
</dbReference>
<dbReference type="InterPro" id="IPR032458">
    <property type="entry name" value="Histone_H2A_CS"/>
</dbReference>
<dbReference type="PANTHER" id="PTHR23430">
    <property type="entry name" value="HISTONE H2A"/>
    <property type="match status" value="1"/>
</dbReference>
<dbReference type="Pfam" id="PF00125">
    <property type="entry name" value="Histone"/>
    <property type="match status" value="1"/>
</dbReference>
<dbReference type="Pfam" id="PF16211">
    <property type="entry name" value="Histone_H2A_C"/>
    <property type="match status" value="1"/>
</dbReference>
<dbReference type="PRINTS" id="PR00620">
    <property type="entry name" value="HISTONEH2A"/>
</dbReference>
<dbReference type="SMART" id="SM00414">
    <property type="entry name" value="H2A"/>
    <property type="match status" value="1"/>
</dbReference>
<dbReference type="SUPFAM" id="SSF47113">
    <property type="entry name" value="Histone-fold"/>
    <property type="match status" value="1"/>
</dbReference>
<dbReference type="PROSITE" id="PS00046">
    <property type="entry name" value="HISTONE_H2A"/>
    <property type="match status" value="1"/>
</dbReference>
<gene>
    <name type="primary">HTA2</name>
    <name type="ORF">LELG_02165</name>
</gene>
<keyword id="KW-0007">Acetylation</keyword>
<keyword id="KW-0158">Chromosome</keyword>
<keyword id="KW-0227">DNA damage</keyword>
<keyword id="KW-0234">DNA repair</keyword>
<keyword id="KW-0238">DNA-binding</keyword>
<keyword id="KW-0488">Methylation</keyword>
<keyword id="KW-0544">Nucleosome core</keyword>
<keyword id="KW-0539">Nucleus</keyword>
<keyword id="KW-1185">Reference proteome</keyword>
<sequence>MTGGKGKSGVAAVAQGASNSRSSKAGLTFPVGRVHRFLRNGNYAQRIGSSAPVYLASVLEYLTAEILELAGNAARDNKKSRIIPRHLQLAIRNDEELNKLLGQVTIAQGGVMPYIHQNLLPKKSGKAAV</sequence>
<proteinExistence type="inferred from homology"/>
<protein>
    <recommendedName>
        <fullName>Histone H2A.2</fullName>
    </recommendedName>
</protein>
<feature type="initiator methionine" description="Removed" evidence="1">
    <location>
        <position position="1"/>
    </location>
</feature>
<feature type="chain" id="PRO_0000297735" description="Histone H2A.2">
    <location>
        <begin position="2"/>
        <end position="129"/>
    </location>
</feature>
<feature type="site" description="Not ubiquitinated" evidence="2">
    <location>
        <position position="122"/>
    </location>
</feature>
<feature type="modified residue" description="N6-acetyllysine" evidence="1">
    <location>
        <position position="5"/>
    </location>
</feature>
<feature type="modified residue" description="N5-methylglutamine" evidence="1">
    <location>
        <position position="108"/>
    </location>
</feature>
<organism>
    <name type="scientific">Lodderomyces elongisporus (strain ATCC 11503 / CBS 2605 / JCM 1781 / NBRC 1676 / NRRL YB-4239)</name>
    <name type="common">Yeast</name>
    <name type="synonym">Saccharomyces elongisporus</name>
    <dbReference type="NCBI Taxonomy" id="379508"/>
    <lineage>
        <taxon>Eukaryota</taxon>
        <taxon>Fungi</taxon>
        <taxon>Dikarya</taxon>
        <taxon>Ascomycota</taxon>
        <taxon>Saccharomycotina</taxon>
        <taxon>Pichiomycetes</taxon>
        <taxon>Debaryomycetaceae</taxon>
        <taxon>Candida/Lodderomyces clade</taxon>
        <taxon>Lodderomyces</taxon>
    </lineage>
</organism>
<name>H2A2_LODEL</name>